<comment type="function">
    <text evidence="3">Putative tail tip fiber protein.</text>
</comment>
<comment type="subcellular location">
    <subcellularLocation>
        <location evidence="1">Virion</location>
    </subcellularLocation>
</comment>
<organismHost>
    <name type="scientific">Escherichia coli</name>
    <dbReference type="NCBI Taxonomy" id="562"/>
</organismHost>
<protein>
    <recommendedName>
        <fullName evidence="2">Putative tail tip fiber protein</fullName>
    </recommendedName>
    <alternativeName>
        <fullName evidence="2">Gene product 20</fullName>
        <shortName>gp20</shortName>
    </alternativeName>
</protein>
<keyword id="KW-0426">Late protein</keyword>
<keyword id="KW-1185">Reference proteome</keyword>
<keyword id="KW-1230">Viral tail fiber protein</keyword>
<keyword id="KW-1227">Viral tail protein</keyword>
<keyword id="KW-0946">Virion</keyword>
<proteinExistence type="predicted"/>
<evidence type="ECO:0000269" key="1">
    <source>
    </source>
</evidence>
<evidence type="ECO:0000305" key="2"/>
<evidence type="ECO:0000305" key="3">
    <source>
    </source>
</evidence>
<evidence type="ECO:0000312" key="4">
    <source>
        <dbReference type="EMBL" id="ABY52821.1"/>
    </source>
</evidence>
<evidence type="ECO:0000312" key="5">
    <source>
        <dbReference type="Proteomes" id="UP000002006"/>
    </source>
</evidence>
<feature type="chain" id="PRO_0000432957" description="Putative tail tip fiber protein">
    <location>
        <begin position="1"/>
        <end position="322"/>
    </location>
</feature>
<reference key="1">
    <citation type="journal article" date="2008" name="J. Mol. Biol.">
        <title>Genomic and proteomic analysis of phiEco32, a novel Escherichia coli bacteriophage.</title>
        <authorList>
            <person name="Savalia D."/>
            <person name="Westblade L.F."/>
            <person name="Goel M."/>
            <person name="Florens L."/>
            <person name="Kemp P."/>
            <person name="Akulenko N."/>
            <person name="Pavlova O."/>
            <person name="Padovan J.C."/>
            <person name="Chait B.T."/>
            <person name="Washburn M.P."/>
            <person name="Ackermann H.W."/>
            <person name="Mushegian A."/>
            <person name="Gabisonia T."/>
            <person name="Molineux I."/>
            <person name="Severinov K."/>
        </authorList>
    </citation>
    <scope>NUCLEOTIDE SEQUENCE [LARGE SCALE GENOMIC DNA]</scope>
    <scope>FUNCTION</scope>
    <scope>SUBCELLULAR LOCATION</scope>
</reference>
<dbReference type="EMBL" id="EU330206">
    <property type="protein sequence ID" value="ABY52821.1"/>
    <property type="molecule type" value="Genomic_DNA"/>
</dbReference>
<dbReference type="RefSeq" id="YP_001671765.1">
    <property type="nucleotide sequence ID" value="NC_010324.1"/>
</dbReference>
<dbReference type="SMR" id="B0FII2"/>
<dbReference type="GeneID" id="5896892"/>
<dbReference type="KEGG" id="vg:5896892"/>
<dbReference type="Proteomes" id="UP000002006">
    <property type="component" value="Genome"/>
</dbReference>
<dbReference type="GO" id="GO:0098024">
    <property type="term" value="C:virus tail, fiber"/>
    <property type="evidence" value="ECO:0007669"/>
    <property type="project" value="UniProtKB-KW"/>
</dbReference>
<dbReference type="InterPro" id="IPR015406">
    <property type="entry name" value="GpJ_CSF"/>
</dbReference>
<dbReference type="Pfam" id="PF09327">
    <property type="entry name" value="Phage_Tail_Tip"/>
    <property type="match status" value="2"/>
</dbReference>
<name>FIB20_BPE32</name>
<accession>B0FII2</accession>
<gene>
    <name evidence="4" type="ORF">phi32_20</name>
</gene>
<sequence length="322" mass="35280">MGAGGFRKNTGRNNTTLPYNVGFLNNVQDTETYNVAVYDELQKVSTATNQMFQAIDEIHEEIDVRIKALNAMNLQFDELENRITTEIETAIADIQTQMGNLSTEDIWDNSVQPPVKLESTVSGFKTSIEGNTTKIQTVEGIVNDQGQEIALVQTELQNINGSLSQYMKLSEYEATWGVNSTVNGRYAGVKLTNNGTNSQFQVTANKFIVGDGSSGNTPFVFEGGRARMEFADIKNVNITTAQIANARIQWAQIDNVSISNAQIQNLSADKITAGSMWGSNWRLTVGGDFVMGGTGGAQLWMNGNRIDFYDGSGALRIRIGSW</sequence>
<organism evidence="5">
    <name type="scientific">Escherichia phage Phieco32</name>
    <name type="common">Escherichia coli phage phi32</name>
    <dbReference type="NCBI Taxonomy" id="2679905"/>
    <lineage>
        <taxon>Viruses</taxon>
        <taxon>Duplodnaviria</taxon>
        <taxon>Heunggongvirae</taxon>
        <taxon>Uroviricota</taxon>
        <taxon>Caudoviricetes</taxon>
        <taxon>Gordonclarkvirinae</taxon>
        <taxon>Kuravirus</taxon>
        <taxon>Kuravirus phiEco32</taxon>
    </lineage>
</organism>